<reference key="1">
    <citation type="journal article" date="2006" name="BMC Genomics">
        <title>Complete genome sequence of Shigella flexneri 5b and comparison with Shigella flexneri 2a.</title>
        <authorList>
            <person name="Nie H."/>
            <person name="Yang F."/>
            <person name="Zhang X."/>
            <person name="Yang J."/>
            <person name="Chen L."/>
            <person name="Wang J."/>
            <person name="Xiong Z."/>
            <person name="Peng J."/>
            <person name="Sun L."/>
            <person name="Dong J."/>
            <person name="Xue Y."/>
            <person name="Xu X."/>
            <person name="Chen S."/>
            <person name="Yao Z."/>
            <person name="Shen Y."/>
            <person name="Jin Q."/>
        </authorList>
    </citation>
    <scope>NUCLEOTIDE SEQUENCE [LARGE SCALE GENOMIC DNA]</scope>
    <source>
        <strain>8401</strain>
    </source>
</reference>
<proteinExistence type="inferred from homology"/>
<protein>
    <recommendedName>
        <fullName evidence="1">ATP synthase subunit beta</fullName>
        <ecNumber evidence="1">7.1.2.2</ecNumber>
    </recommendedName>
    <alternativeName>
        <fullName evidence="1">ATP synthase F1 sector subunit beta</fullName>
    </alternativeName>
    <alternativeName>
        <fullName evidence="1">F-ATPase subunit beta</fullName>
    </alternativeName>
</protein>
<evidence type="ECO:0000255" key="1">
    <source>
        <dbReference type="HAMAP-Rule" id="MF_01347"/>
    </source>
</evidence>
<name>ATPB_SHIF8</name>
<accession>Q0SYU4</accession>
<sequence>MATGKIVQVIGAVVDVEFPQDAVPRVYDALEVQNGNERLVLEVQQQLGGGIVRTIAMGSSDGLRRGLDVKDLEHPIEVPVGKATLGRIMNVLGEPVDMKGEIGEEERWAIHRAAPSYEELSNSQELLETGIKVIDLMCPFAKGGKVGLFGGAGVGKTVNMMELIRNIAIEHSGYSVFAGVGERTREGNDFYHEMTDSNVIDKVSLVYGQMNEPPGNRLRVALTGLTMAEKFRDEGRDVLLFVDNIYRYTLAGTEVSALLGRMPSAVGYQPTLAEEMGVLQERITSTKTGSITSVQAVYVPADDLTDPSPATTFAHLDATVVLSRQIASLGIYPAVDPLDSTSRQLDPLVVGQEHYDTARGVQSILQRYQELKDIIAILGMDELSEEDKLVVARARKIQRFLSQPFFVAEVFTGSPGKYVSLKDTIRGFKGIMEGEYDHLPEQAFYMVGSIEEAVEKAKKL</sequence>
<dbReference type="EC" id="7.1.2.2" evidence="1"/>
<dbReference type="EMBL" id="CP000266">
    <property type="protein sequence ID" value="ABF05771.1"/>
    <property type="molecule type" value="Genomic_DNA"/>
</dbReference>
<dbReference type="RefSeq" id="WP_000190506.1">
    <property type="nucleotide sequence ID" value="NC_008258.1"/>
</dbReference>
<dbReference type="SMR" id="Q0SYU4"/>
<dbReference type="GeneID" id="93778235"/>
<dbReference type="KEGG" id="sfv:SFV_3758"/>
<dbReference type="HOGENOM" id="CLU_022398_0_2_6"/>
<dbReference type="Proteomes" id="UP000000659">
    <property type="component" value="Chromosome"/>
</dbReference>
<dbReference type="GO" id="GO:0005886">
    <property type="term" value="C:plasma membrane"/>
    <property type="evidence" value="ECO:0007669"/>
    <property type="project" value="UniProtKB-SubCell"/>
</dbReference>
<dbReference type="GO" id="GO:0045259">
    <property type="term" value="C:proton-transporting ATP synthase complex"/>
    <property type="evidence" value="ECO:0007669"/>
    <property type="project" value="UniProtKB-KW"/>
</dbReference>
<dbReference type="GO" id="GO:0005524">
    <property type="term" value="F:ATP binding"/>
    <property type="evidence" value="ECO:0007669"/>
    <property type="project" value="UniProtKB-UniRule"/>
</dbReference>
<dbReference type="GO" id="GO:0016887">
    <property type="term" value="F:ATP hydrolysis activity"/>
    <property type="evidence" value="ECO:0007669"/>
    <property type="project" value="InterPro"/>
</dbReference>
<dbReference type="GO" id="GO:0046933">
    <property type="term" value="F:proton-transporting ATP synthase activity, rotational mechanism"/>
    <property type="evidence" value="ECO:0007669"/>
    <property type="project" value="UniProtKB-UniRule"/>
</dbReference>
<dbReference type="CDD" id="cd18110">
    <property type="entry name" value="ATP-synt_F1_beta_C"/>
    <property type="match status" value="1"/>
</dbReference>
<dbReference type="CDD" id="cd18115">
    <property type="entry name" value="ATP-synt_F1_beta_N"/>
    <property type="match status" value="1"/>
</dbReference>
<dbReference type="CDD" id="cd01133">
    <property type="entry name" value="F1-ATPase_beta_CD"/>
    <property type="match status" value="1"/>
</dbReference>
<dbReference type="FunFam" id="1.10.1140.10:FF:000001">
    <property type="entry name" value="ATP synthase subunit beta"/>
    <property type="match status" value="1"/>
</dbReference>
<dbReference type="FunFam" id="2.40.10.170:FF:000003">
    <property type="entry name" value="ATP synthase subunit beta"/>
    <property type="match status" value="1"/>
</dbReference>
<dbReference type="FunFam" id="3.40.50.300:FF:000004">
    <property type="entry name" value="ATP synthase subunit beta"/>
    <property type="match status" value="1"/>
</dbReference>
<dbReference type="Gene3D" id="2.40.10.170">
    <property type="match status" value="1"/>
</dbReference>
<dbReference type="Gene3D" id="1.10.1140.10">
    <property type="entry name" value="Bovine Mitochondrial F1-atpase, Atp Synthase Beta Chain, Chain D, domain 3"/>
    <property type="match status" value="1"/>
</dbReference>
<dbReference type="Gene3D" id="3.40.50.300">
    <property type="entry name" value="P-loop containing nucleotide triphosphate hydrolases"/>
    <property type="match status" value="1"/>
</dbReference>
<dbReference type="HAMAP" id="MF_01347">
    <property type="entry name" value="ATP_synth_beta_bact"/>
    <property type="match status" value="1"/>
</dbReference>
<dbReference type="InterPro" id="IPR003593">
    <property type="entry name" value="AAA+_ATPase"/>
</dbReference>
<dbReference type="InterPro" id="IPR055190">
    <property type="entry name" value="ATP-synt_VA_C"/>
</dbReference>
<dbReference type="InterPro" id="IPR005722">
    <property type="entry name" value="ATP_synth_F1_bsu"/>
</dbReference>
<dbReference type="InterPro" id="IPR020003">
    <property type="entry name" value="ATPase_a/bsu_AS"/>
</dbReference>
<dbReference type="InterPro" id="IPR050053">
    <property type="entry name" value="ATPase_alpha/beta_chains"/>
</dbReference>
<dbReference type="InterPro" id="IPR004100">
    <property type="entry name" value="ATPase_F1/V1/A1_a/bsu_N"/>
</dbReference>
<dbReference type="InterPro" id="IPR036121">
    <property type="entry name" value="ATPase_F1/V1/A1_a/bsu_N_sf"/>
</dbReference>
<dbReference type="InterPro" id="IPR000194">
    <property type="entry name" value="ATPase_F1/V1/A1_a/bsu_nucl-bd"/>
</dbReference>
<dbReference type="InterPro" id="IPR024034">
    <property type="entry name" value="ATPase_F1/V1_b/a_C"/>
</dbReference>
<dbReference type="InterPro" id="IPR027417">
    <property type="entry name" value="P-loop_NTPase"/>
</dbReference>
<dbReference type="NCBIfam" id="TIGR01039">
    <property type="entry name" value="atpD"/>
    <property type="match status" value="1"/>
</dbReference>
<dbReference type="PANTHER" id="PTHR15184">
    <property type="entry name" value="ATP SYNTHASE"/>
    <property type="match status" value="1"/>
</dbReference>
<dbReference type="PANTHER" id="PTHR15184:SF71">
    <property type="entry name" value="ATP SYNTHASE SUBUNIT BETA, MITOCHONDRIAL"/>
    <property type="match status" value="1"/>
</dbReference>
<dbReference type="Pfam" id="PF00006">
    <property type="entry name" value="ATP-synt_ab"/>
    <property type="match status" value="1"/>
</dbReference>
<dbReference type="Pfam" id="PF02874">
    <property type="entry name" value="ATP-synt_ab_N"/>
    <property type="match status" value="1"/>
</dbReference>
<dbReference type="Pfam" id="PF22919">
    <property type="entry name" value="ATP-synt_VA_C"/>
    <property type="match status" value="1"/>
</dbReference>
<dbReference type="SMART" id="SM00382">
    <property type="entry name" value="AAA"/>
    <property type="match status" value="1"/>
</dbReference>
<dbReference type="SUPFAM" id="SSF47917">
    <property type="entry name" value="C-terminal domain of alpha and beta subunits of F1 ATP synthase"/>
    <property type="match status" value="1"/>
</dbReference>
<dbReference type="SUPFAM" id="SSF50615">
    <property type="entry name" value="N-terminal domain of alpha and beta subunits of F1 ATP synthase"/>
    <property type="match status" value="1"/>
</dbReference>
<dbReference type="SUPFAM" id="SSF52540">
    <property type="entry name" value="P-loop containing nucleoside triphosphate hydrolases"/>
    <property type="match status" value="1"/>
</dbReference>
<dbReference type="PROSITE" id="PS00152">
    <property type="entry name" value="ATPASE_ALPHA_BETA"/>
    <property type="match status" value="1"/>
</dbReference>
<organism>
    <name type="scientific">Shigella flexneri serotype 5b (strain 8401)</name>
    <dbReference type="NCBI Taxonomy" id="373384"/>
    <lineage>
        <taxon>Bacteria</taxon>
        <taxon>Pseudomonadati</taxon>
        <taxon>Pseudomonadota</taxon>
        <taxon>Gammaproteobacteria</taxon>
        <taxon>Enterobacterales</taxon>
        <taxon>Enterobacteriaceae</taxon>
        <taxon>Shigella</taxon>
    </lineage>
</organism>
<comment type="function">
    <text evidence="1">Produces ATP from ADP in the presence of a proton gradient across the membrane. The catalytic sites are hosted primarily by the beta subunits.</text>
</comment>
<comment type="catalytic activity">
    <reaction evidence="1">
        <text>ATP + H2O + 4 H(+)(in) = ADP + phosphate + 5 H(+)(out)</text>
        <dbReference type="Rhea" id="RHEA:57720"/>
        <dbReference type="ChEBI" id="CHEBI:15377"/>
        <dbReference type="ChEBI" id="CHEBI:15378"/>
        <dbReference type="ChEBI" id="CHEBI:30616"/>
        <dbReference type="ChEBI" id="CHEBI:43474"/>
        <dbReference type="ChEBI" id="CHEBI:456216"/>
        <dbReference type="EC" id="7.1.2.2"/>
    </reaction>
</comment>
<comment type="subunit">
    <text evidence="1">F-type ATPases have 2 components, CF(1) - the catalytic core - and CF(0) - the membrane proton channel. CF(1) has five subunits: alpha(3), beta(3), gamma(1), delta(1), epsilon(1). CF(0) has three main subunits: a(1), b(2) and c(9-12). The alpha and beta chains form an alternating ring which encloses part of the gamma chain. CF(1) is attached to CF(0) by a central stalk formed by the gamma and epsilon chains, while a peripheral stalk is formed by the delta and b chains.</text>
</comment>
<comment type="subcellular location">
    <subcellularLocation>
        <location evidence="1">Cell inner membrane</location>
        <topology evidence="1">Peripheral membrane protein</topology>
    </subcellularLocation>
</comment>
<comment type="similarity">
    <text evidence="1">Belongs to the ATPase alpha/beta chains family.</text>
</comment>
<gene>
    <name evidence="1" type="primary">atpD</name>
    <name type="ordered locus">SFV_3758</name>
</gene>
<keyword id="KW-0066">ATP synthesis</keyword>
<keyword id="KW-0067">ATP-binding</keyword>
<keyword id="KW-0997">Cell inner membrane</keyword>
<keyword id="KW-1003">Cell membrane</keyword>
<keyword id="KW-0139">CF(1)</keyword>
<keyword id="KW-0375">Hydrogen ion transport</keyword>
<keyword id="KW-0406">Ion transport</keyword>
<keyword id="KW-0472">Membrane</keyword>
<keyword id="KW-0547">Nucleotide-binding</keyword>
<keyword id="KW-1278">Translocase</keyword>
<keyword id="KW-0813">Transport</keyword>
<feature type="chain" id="PRO_1000055167" description="ATP synthase subunit beta">
    <location>
        <begin position="1"/>
        <end position="460"/>
    </location>
</feature>
<feature type="binding site" evidence="1">
    <location>
        <begin position="150"/>
        <end position="157"/>
    </location>
    <ligand>
        <name>ATP</name>
        <dbReference type="ChEBI" id="CHEBI:30616"/>
    </ligand>
</feature>